<proteinExistence type="inferred from homology"/>
<comment type="function">
    <text evidence="1">F(1)F(0) ATP synthase produces ATP from ADP in the presence of a proton or sodium gradient. F-type ATPases consist of two structural domains, F(1) containing the extramembraneous catalytic core and F(0) containing the membrane proton channel, linked together by a central stalk and a peripheral stalk. During catalysis, ATP synthesis in the catalytic domain of F(1) is coupled via a rotary mechanism of the central stalk subunits to proton translocation.</text>
</comment>
<comment type="function">
    <text evidence="1">Component of the F(0) channel, it forms part of the peripheral stalk, linking F(1) to F(0).</text>
</comment>
<comment type="subunit">
    <text evidence="1">F-type ATPases have 2 components, F(1) - the catalytic core - and F(0) - the membrane proton channel. F(1) has five subunits: alpha(3), beta(3), gamma(1), delta(1), epsilon(1). F(0) has three main subunits: a(1), b(2) and c(10-14). The alpha and beta chains form an alternating ring which encloses part of the gamma chain. F(1) is attached to F(0) by a central stalk formed by the gamma and epsilon chains, while a peripheral stalk is formed by the delta and b chains.</text>
</comment>
<comment type="subcellular location">
    <subcellularLocation>
        <location evidence="1">Cell inner membrane</location>
        <topology evidence="1">Single-pass membrane protein</topology>
    </subcellularLocation>
</comment>
<comment type="similarity">
    <text evidence="1">Belongs to the ATPase B chain family.</text>
</comment>
<feature type="chain" id="PRO_0000368659" description="ATP synthase subunit b">
    <location>
        <begin position="1"/>
        <end position="156"/>
    </location>
</feature>
<feature type="transmembrane region" description="Helical" evidence="1">
    <location>
        <begin position="7"/>
        <end position="27"/>
    </location>
</feature>
<name>ATPF_POLSJ</name>
<evidence type="ECO:0000255" key="1">
    <source>
        <dbReference type="HAMAP-Rule" id="MF_01398"/>
    </source>
</evidence>
<gene>
    <name evidence="1" type="primary">atpF</name>
    <name type="ordered locus">Bpro_0323</name>
</gene>
<dbReference type="EMBL" id="CP000316">
    <property type="protein sequence ID" value="ABE42288.1"/>
    <property type="molecule type" value="Genomic_DNA"/>
</dbReference>
<dbReference type="RefSeq" id="WP_011481295.1">
    <property type="nucleotide sequence ID" value="NC_007948.1"/>
</dbReference>
<dbReference type="SMR" id="Q12GQ4"/>
<dbReference type="STRING" id="296591.Bpro_0323"/>
<dbReference type="KEGG" id="pol:Bpro_0323"/>
<dbReference type="eggNOG" id="COG0711">
    <property type="taxonomic scope" value="Bacteria"/>
</dbReference>
<dbReference type="HOGENOM" id="CLU_079215_4_5_4"/>
<dbReference type="OrthoDB" id="9788020at2"/>
<dbReference type="Proteomes" id="UP000001983">
    <property type="component" value="Chromosome"/>
</dbReference>
<dbReference type="GO" id="GO:0005886">
    <property type="term" value="C:plasma membrane"/>
    <property type="evidence" value="ECO:0007669"/>
    <property type="project" value="UniProtKB-SubCell"/>
</dbReference>
<dbReference type="GO" id="GO:0045259">
    <property type="term" value="C:proton-transporting ATP synthase complex"/>
    <property type="evidence" value="ECO:0007669"/>
    <property type="project" value="UniProtKB-KW"/>
</dbReference>
<dbReference type="GO" id="GO:0046933">
    <property type="term" value="F:proton-transporting ATP synthase activity, rotational mechanism"/>
    <property type="evidence" value="ECO:0007669"/>
    <property type="project" value="UniProtKB-UniRule"/>
</dbReference>
<dbReference type="GO" id="GO:0046961">
    <property type="term" value="F:proton-transporting ATPase activity, rotational mechanism"/>
    <property type="evidence" value="ECO:0007669"/>
    <property type="project" value="TreeGrafter"/>
</dbReference>
<dbReference type="CDD" id="cd06503">
    <property type="entry name" value="ATP-synt_Fo_b"/>
    <property type="match status" value="1"/>
</dbReference>
<dbReference type="Gene3D" id="6.10.250.1580">
    <property type="match status" value="1"/>
</dbReference>
<dbReference type="HAMAP" id="MF_01398">
    <property type="entry name" value="ATP_synth_b_bprime"/>
    <property type="match status" value="1"/>
</dbReference>
<dbReference type="InterPro" id="IPR028987">
    <property type="entry name" value="ATP_synth_B-like_membr_sf"/>
</dbReference>
<dbReference type="InterPro" id="IPR002146">
    <property type="entry name" value="ATP_synth_b/b'su_bac/chlpt"/>
</dbReference>
<dbReference type="InterPro" id="IPR005864">
    <property type="entry name" value="ATP_synth_F0_bsu_bac"/>
</dbReference>
<dbReference type="InterPro" id="IPR050059">
    <property type="entry name" value="ATP_synthase_B_chain"/>
</dbReference>
<dbReference type="NCBIfam" id="TIGR01144">
    <property type="entry name" value="ATP_synt_b"/>
    <property type="match status" value="1"/>
</dbReference>
<dbReference type="NCBIfam" id="NF004411">
    <property type="entry name" value="PRK05759.1-2"/>
    <property type="match status" value="1"/>
</dbReference>
<dbReference type="PANTHER" id="PTHR33445:SF1">
    <property type="entry name" value="ATP SYNTHASE SUBUNIT B"/>
    <property type="match status" value="1"/>
</dbReference>
<dbReference type="PANTHER" id="PTHR33445">
    <property type="entry name" value="ATP SYNTHASE SUBUNIT B', CHLOROPLASTIC"/>
    <property type="match status" value="1"/>
</dbReference>
<dbReference type="Pfam" id="PF00430">
    <property type="entry name" value="ATP-synt_B"/>
    <property type="match status" value="1"/>
</dbReference>
<dbReference type="SUPFAM" id="SSF81573">
    <property type="entry name" value="F1F0 ATP synthase subunit B, membrane domain"/>
    <property type="match status" value="1"/>
</dbReference>
<reference key="1">
    <citation type="journal article" date="2008" name="Appl. Environ. Microbiol.">
        <title>The genome of Polaromonas sp. strain JS666: insights into the evolution of a hydrocarbon- and xenobiotic-degrading bacterium, and features of relevance to biotechnology.</title>
        <authorList>
            <person name="Mattes T.E."/>
            <person name="Alexander A.K."/>
            <person name="Richardson P.M."/>
            <person name="Munk A.C."/>
            <person name="Han C.S."/>
            <person name="Stothard P."/>
            <person name="Coleman N.V."/>
        </authorList>
    </citation>
    <scope>NUCLEOTIDE SEQUENCE [LARGE SCALE GENOMIC DNA]</scope>
    <source>
        <strain>JS666 / ATCC BAA-500</strain>
    </source>
</reference>
<keyword id="KW-0066">ATP synthesis</keyword>
<keyword id="KW-0997">Cell inner membrane</keyword>
<keyword id="KW-1003">Cell membrane</keyword>
<keyword id="KW-0138">CF(0)</keyword>
<keyword id="KW-0375">Hydrogen ion transport</keyword>
<keyword id="KW-0406">Ion transport</keyword>
<keyword id="KW-0472">Membrane</keyword>
<keyword id="KW-1185">Reference proteome</keyword>
<keyword id="KW-0812">Transmembrane</keyword>
<keyword id="KW-1133">Transmembrane helix</keyword>
<keyword id="KW-0813">Transport</keyword>
<organism>
    <name type="scientific">Polaromonas sp. (strain JS666 / ATCC BAA-500)</name>
    <dbReference type="NCBI Taxonomy" id="296591"/>
    <lineage>
        <taxon>Bacteria</taxon>
        <taxon>Pseudomonadati</taxon>
        <taxon>Pseudomonadota</taxon>
        <taxon>Betaproteobacteria</taxon>
        <taxon>Burkholderiales</taxon>
        <taxon>Comamonadaceae</taxon>
        <taxon>Polaromonas</taxon>
    </lineage>
</organism>
<sequence>MSINATLFVQAIVFAILVWFTMKFVWPPIMKALDERAQKIADGLAAADKAKSELSVANKRVEEELAKSRGESAVRLAEAERRAQALIEEAKAKATEEGSKIIAAAKVEAEQQTVKARETLREQVAALAVKGAEQILRKEVNAGVHADLLGRLKTEL</sequence>
<accession>Q12GQ4</accession>
<protein>
    <recommendedName>
        <fullName evidence="1">ATP synthase subunit b</fullName>
    </recommendedName>
    <alternativeName>
        <fullName evidence="1">ATP synthase F(0) sector subunit b</fullName>
    </alternativeName>
    <alternativeName>
        <fullName evidence="1">ATPase subunit I</fullName>
    </alternativeName>
    <alternativeName>
        <fullName evidence="1">F-type ATPase subunit b</fullName>
        <shortName evidence="1">F-ATPase subunit b</shortName>
    </alternativeName>
</protein>